<protein>
    <recommendedName>
        <fullName evidence="1">Putative competence-damage inducible protein</fullName>
    </recommendedName>
</protein>
<accession>P0DA26</accession>
<accession>Q8K5J9</accession>
<sequence>MKAELIAVGTEILTGQIVNTNAQFLSEKMAELGIDVYFQTAVGDNEERLLSVITTASQRSDLVILCGGLGPTKDDLTKQTLAKYLRRDLVYDEQACQKLDDFFAKRKPSSRTPNNERQAQVIEGSIPLPNKTGLAVGGFITVDGISYVVLPGPPSELKPMVNEELVPLLSKQYSTLYSKVLRFFGIGESQLVTVLSDFIENQTDPTIAPYAKTGEVTLRLSTKTENQALADKKLGQLEAQLLSRKTLEGQPLADVFYGYGEDNSLARETFELLVKYDKSITAAESLTAGLFQSTLASFPGASQVFNGGFVTYSMEEKAKMLGLPLEELKSHGVVSAYTAEGMAEQARLLTGADIGVSLTGVAGPDMLEEQPAGTVFIGLATQNKVESIKVLISGRSRLDVCYIATLHAFNMVRKTLLKLENLL</sequence>
<name>CINA_STRP3</name>
<reference key="1">
    <citation type="journal article" date="2002" name="Proc. Natl. Acad. Sci. U.S.A.">
        <title>Genome sequence of a serotype M3 strain of group A Streptococcus: phage-encoded toxins, the high-virulence phenotype, and clone emergence.</title>
        <authorList>
            <person name="Beres S.B."/>
            <person name="Sylva G.L."/>
            <person name="Barbian K.D."/>
            <person name="Lei B."/>
            <person name="Hoff J.S."/>
            <person name="Mammarella N.D."/>
            <person name="Liu M.-Y."/>
            <person name="Smoot J.C."/>
            <person name="Porcella S.F."/>
            <person name="Parkins L.D."/>
            <person name="Campbell D.S."/>
            <person name="Smith T.M."/>
            <person name="McCormick J.K."/>
            <person name="Leung D.Y.M."/>
            <person name="Schlievert P.M."/>
            <person name="Musser J.M."/>
        </authorList>
    </citation>
    <scope>NUCLEOTIDE SEQUENCE [LARGE SCALE GENOMIC DNA]</scope>
    <source>
        <strain>ATCC BAA-595 / MGAS315</strain>
    </source>
</reference>
<evidence type="ECO:0000255" key="1">
    <source>
        <dbReference type="HAMAP-Rule" id="MF_00226"/>
    </source>
</evidence>
<comment type="similarity">
    <text evidence="1">Belongs to the CinA family.</text>
</comment>
<organism>
    <name type="scientific">Streptococcus pyogenes serotype M3 (strain ATCC BAA-595 / MGAS315)</name>
    <dbReference type="NCBI Taxonomy" id="198466"/>
    <lineage>
        <taxon>Bacteria</taxon>
        <taxon>Bacillati</taxon>
        <taxon>Bacillota</taxon>
        <taxon>Bacilli</taxon>
        <taxon>Lactobacillales</taxon>
        <taxon>Streptococcaceae</taxon>
        <taxon>Streptococcus</taxon>
    </lineage>
</organism>
<feature type="chain" id="PRO_0000156778" description="Putative competence-damage inducible protein">
    <location>
        <begin position="1"/>
        <end position="423"/>
    </location>
</feature>
<proteinExistence type="inferred from homology"/>
<gene>
    <name evidence="1" type="primary">cinA</name>
    <name type="ordered locus">SpyM3_1801</name>
</gene>
<dbReference type="EMBL" id="AE014074">
    <property type="protein sequence ID" value="AAM80408.1"/>
    <property type="molecule type" value="Genomic_DNA"/>
</dbReference>
<dbReference type="RefSeq" id="WP_011055089.1">
    <property type="nucleotide sequence ID" value="NC_004070.1"/>
</dbReference>
<dbReference type="SMR" id="P0DA26"/>
<dbReference type="KEGG" id="spg:SpyM3_1801"/>
<dbReference type="HOGENOM" id="CLU_030805_9_3_9"/>
<dbReference type="Proteomes" id="UP000000564">
    <property type="component" value="Chromosome"/>
</dbReference>
<dbReference type="CDD" id="cd00885">
    <property type="entry name" value="cinA"/>
    <property type="match status" value="1"/>
</dbReference>
<dbReference type="Gene3D" id="3.30.70.2860">
    <property type="match status" value="1"/>
</dbReference>
<dbReference type="Gene3D" id="3.90.950.20">
    <property type="entry name" value="CinA-like"/>
    <property type="match status" value="1"/>
</dbReference>
<dbReference type="Gene3D" id="3.40.980.10">
    <property type="entry name" value="MoaB/Mog-like domain"/>
    <property type="match status" value="1"/>
</dbReference>
<dbReference type="HAMAP" id="MF_00226_B">
    <property type="entry name" value="CinA_B"/>
    <property type="match status" value="1"/>
</dbReference>
<dbReference type="InterPro" id="IPR050101">
    <property type="entry name" value="CinA"/>
</dbReference>
<dbReference type="InterPro" id="IPR036653">
    <property type="entry name" value="CinA-like_C"/>
</dbReference>
<dbReference type="InterPro" id="IPR008136">
    <property type="entry name" value="CinA_C"/>
</dbReference>
<dbReference type="InterPro" id="IPR041424">
    <property type="entry name" value="CinA_KH"/>
</dbReference>
<dbReference type="InterPro" id="IPR008135">
    <property type="entry name" value="Competence-induced_CinA"/>
</dbReference>
<dbReference type="InterPro" id="IPR036425">
    <property type="entry name" value="MoaB/Mog-like_dom_sf"/>
</dbReference>
<dbReference type="InterPro" id="IPR001453">
    <property type="entry name" value="MoaB/Mog_dom"/>
</dbReference>
<dbReference type="NCBIfam" id="TIGR00200">
    <property type="entry name" value="cinA_nterm"/>
    <property type="match status" value="1"/>
</dbReference>
<dbReference type="NCBIfam" id="TIGR00177">
    <property type="entry name" value="molyb_syn"/>
    <property type="match status" value="1"/>
</dbReference>
<dbReference type="NCBIfam" id="TIGR00199">
    <property type="entry name" value="PncC_domain"/>
    <property type="match status" value="1"/>
</dbReference>
<dbReference type="NCBIfam" id="NF001813">
    <property type="entry name" value="PRK00549.1"/>
    <property type="match status" value="1"/>
</dbReference>
<dbReference type="PANTHER" id="PTHR13939">
    <property type="entry name" value="NICOTINAMIDE-NUCLEOTIDE AMIDOHYDROLASE PNCC"/>
    <property type="match status" value="1"/>
</dbReference>
<dbReference type="PANTHER" id="PTHR13939:SF0">
    <property type="entry name" value="NMN AMIDOHYDROLASE-LIKE PROTEIN YFAY"/>
    <property type="match status" value="1"/>
</dbReference>
<dbReference type="Pfam" id="PF02464">
    <property type="entry name" value="CinA"/>
    <property type="match status" value="1"/>
</dbReference>
<dbReference type="Pfam" id="PF18146">
    <property type="entry name" value="CinA_KH"/>
    <property type="match status" value="1"/>
</dbReference>
<dbReference type="Pfam" id="PF00994">
    <property type="entry name" value="MoCF_biosynth"/>
    <property type="match status" value="1"/>
</dbReference>
<dbReference type="PIRSF" id="PIRSF006728">
    <property type="entry name" value="CinA"/>
    <property type="match status" value="1"/>
</dbReference>
<dbReference type="SMART" id="SM00852">
    <property type="entry name" value="MoCF_biosynth"/>
    <property type="match status" value="1"/>
</dbReference>
<dbReference type="SUPFAM" id="SSF142433">
    <property type="entry name" value="CinA-like"/>
    <property type="match status" value="1"/>
</dbReference>
<dbReference type="SUPFAM" id="SSF53218">
    <property type="entry name" value="Molybdenum cofactor biosynthesis proteins"/>
    <property type="match status" value="1"/>
</dbReference>